<gene>
    <name evidence="4" type="primary">ATL1</name>
</gene>
<organism>
    <name type="scientific">Pongo abelii</name>
    <name type="common">Sumatran orangutan</name>
    <name type="synonym">Pongo pygmaeus abelii</name>
    <dbReference type="NCBI Taxonomy" id="9601"/>
    <lineage>
        <taxon>Eukaryota</taxon>
        <taxon>Metazoa</taxon>
        <taxon>Chordata</taxon>
        <taxon>Craniata</taxon>
        <taxon>Vertebrata</taxon>
        <taxon>Euteleostomi</taxon>
        <taxon>Mammalia</taxon>
        <taxon>Eutheria</taxon>
        <taxon>Euarchontoglires</taxon>
        <taxon>Primates</taxon>
        <taxon>Haplorrhini</taxon>
        <taxon>Catarrhini</taxon>
        <taxon>Hominidae</taxon>
        <taxon>Pongo</taxon>
    </lineage>
</organism>
<name>ATLA1_PONAB</name>
<comment type="function">
    <text evidence="2 4">Atlastin-1 (ATL1) is a membrane-anchored GTPase that mediates the GTP-dependent fusion of endoplasmic reticulum (ER) membranes, maintaining the continuous ER network. It facilitates the formation of three-way junctions where ER tubules intersect. Two atlastin-1 on neighboring ER tubules bind GTP and form loose homodimers through the GB1/RHD3-type G domains and 3HB regions. Upon GTP hydrolysis, the 3HB regions tighten, pulling the membranes together to drive their fusion. After fusion, the homodimer disassembles upon release of inorganic phosphate (Pi). Subsequently, GDP dissociates, resetting the monomers to a conformation ready for a new fusion cycle. May also regulate more or less directly Golgi biogenesis (By similarity). Indirectly regulates axonal development (By similarity).</text>
</comment>
<comment type="catalytic activity">
    <reaction evidence="4">
        <text>GTP + H2O = GDP + phosphate + H(+)</text>
        <dbReference type="Rhea" id="RHEA:19669"/>
        <dbReference type="ChEBI" id="CHEBI:15377"/>
        <dbReference type="ChEBI" id="CHEBI:15378"/>
        <dbReference type="ChEBI" id="CHEBI:37565"/>
        <dbReference type="ChEBI" id="CHEBI:43474"/>
        <dbReference type="ChEBI" id="CHEBI:58189"/>
    </reaction>
    <physiologicalReaction direction="left-to-right" evidence="4">
        <dbReference type="Rhea" id="RHEA:19670"/>
    </physiologicalReaction>
</comment>
<comment type="subunit">
    <text evidence="2 4">Monomeric and homodimeric. The homodimer, transiently formed by two molecules on opposing membranes, is the active form mediating ER membrane fusion. Interacts with REEP1, REEP5, RTN3 and RTN4 (via the transmembrane region); these proteins are involved in endoplasmic reticulum tubular network organization. Interacts with ZFYVE27; both proteins are involved in endoplasmic reticulum tubular network organization (By similarity). Interacts with ARL6IP1; both proteins are involved in endoplasmic reticulum tubular network organization (By similarity). Interacts with SPAST; the interaction is direct, could recruit SPAST to Golgi membranes. Interacts (via N-terminal region) with MAP4K4 (via CNH regulatory domain). May interact with TMED2. Interacts with CPT1C (By similarity).</text>
</comment>
<comment type="subcellular location">
    <subcellularLocation>
        <location evidence="4">Endoplasmic reticulum membrane</location>
        <topology evidence="4">Multi-pass membrane protein</topology>
    </subcellularLocation>
    <subcellularLocation>
        <location evidence="4">Golgi apparatus membrane</location>
        <topology evidence="4">Multi-pass membrane protein</topology>
    </subcellularLocation>
    <subcellularLocation>
        <location evidence="2">Cell projection</location>
        <location evidence="2">Axon</location>
    </subcellularLocation>
    <text evidence="4">Localizes to endoplasmic reticulum tubular network.</text>
</comment>
<comment type="domain">
    <text evidence="4">The N-terminal hypervariable region (HVR) regulates ATL1-mediated membrane tethering by organizing ATL1 into a lattice structure on the same membrane. It does not affect GTP hydrolysis or membrane fusion. It has no effect on the GTP hydrolysis and fusion steps.</text>
</comment>
<comment type="domain">
    <text evidence="4">The GB1/RHD3-type G domain mediates GTP-binding and hydrolysis as well as homodimerization.</text>
</comment>
<comment type="domain">
    <text evidence="4">The two three-helix bundle (3HB) regions in the homodimer are loosely associated initially, but they tighten upon GTP hydrolysis, facilitating the fusion of membranes.</text>
</comment>
<comment type="domain">
    <text evidence="4">The C-terminal autoinhibitory domain negatively regulates the GTPase-dependent fusogenic activity without affecting GTP-binding.</text>
</comment>
<comment type="PTM">
    <text evidence="4">Phosphorylated. Phosphorylation, by different kinases, of the N-terminal hypervariable region (HVR) regulates the ATL1-mediated membrane tethering step.</text>
</comment>
<comment type="similarity">
    <text evidence="6">Belongs to the TRAFAC class dynamin-like GTPase superfamily. GB1/RHD3 GTPase family. GB1 subfamily.</text>
</comment>
<sequence>MAKNRRDRNSWGGFSEKTYEWSSEEEEPVKKAGPVQVLIVKDDHSFELDETALNRILLSEAVRDKEVVAVSVAGAFRKGKSFLMDFMLRYMYNQESVDWVGDYNEPLTGFSWRGGSERETTGIQIWSEIFLINKPDGKKVAVLLMDTQGTFDSQSTLRDSATVFALSTMISSIQVYNLSQNVQEDDLQHLQLFTEYGRLAMEETFLKPFQSLIFLVRDWSFPYEFSYGADGGAKFLEKRLKVSGNQHEELQNVRKHIHSCFTNISCFLLPHPGLKVATNPNFDGKLKEIDDEFIKNLKILIPWLLSPESLDIKEINGNKITCRGLVEYFKAYIKIYQGEELPHPKSMLQATAEANNLAAVATAKDTYNKKMEEICGGDKPFLAPNDLQTKHLQLKEESVKLFRGVKKMGGEEFSRRYLQQLESEIDELYIQYIKHNDSKNIFHAARTPATLFVVIFITYVIAGVTGFIGLDIIASLCNMIMGLTLITLCTWAYIRYSGEYRELGAVIDQVAAALWDQGSTNEALYKLYSAAATHRHLYHQAFPTPKSESTEQSEKKKM</sequence>
<dbReference type="EC" id="3.6.5.-" evidence="4"/>
<dbReference type="EMBL" id="CR859145">
    <property type="protein sequence ID" value="CAH91336.1"/>
    <property type="molecule type" value="mRNA"/>
</dbReference>
<dbReference type="EMBL" id="CR861204">
    <property type="protein sequence ID" value="CAH93275.1"/>
    <property type="molecule type" value="mRNA"/>
</dbReference>
<dbReference type="RefSeq" id="NP_001126926.1">
    <property type="nucleotide sequence ID" value="NM_001133454.1"/>
</dbReference>
<dbReference type="RefSeq" id="XP_054385791.1">
    <property type="nucleotide sequence ID" value="XM_054529816.2"/>
</dbReference>
<dbReference type="SMR" id="Q5R4P1"/>
<dbReference type="FunCoup" id="Q5R4P1">
    <property type="interactions" value="2220"/>
</dbReference>
<dbReference type="STRING" id="9601.ENSPPYP00000006595"/>
<dbReference type="Ensembl" id="ENSPPYT00000006857.3">
    <property type="protein sequence ID" value="ENSPPYP00000006595.2"/>
    <property type="gene ID" value="ENSPPYG00000005804.3"/>
</dbReference>
<dbReference type="GeneID" id="100173943"/>
<dbReference type="KEGG" id="pon:100173943"/>
<dbReference type="CTD" id="51062"/>
<dbReference type="eggNOG" id="KOG2037">
    <property type="taxonomic scope" value="Eukaryota"/>
</dbReference>
<dbReference type="GeneTree" id="ENSGT00940000158704"/>
<dbReference type="HOGENOM" id="CLU_021447_2_0_1"/>
<dbReference type="InParanoid" id="Q5R4P1"/>
<dbReference type="OMA" id="GFIHNIW"/>
<dbReference type="OrthoDB" id="7788754at2759"/>
<dbReference type="TreeFam" id="TF105251"/>
<dbReference type="Proteomes" id="UP000001595">
    <property type="component" value="Chromosome 14"/>
</dbReference>
<dbReference type="GO" id="GO:0030424">
    <property type="term" value="C:axon"/>
    <property type="evidence" value="ECO:0007669"/>
    <property type="project" value="UniProtKB-SubCell"/>
</dbReference>
<dbReference type="GO" id="GO:0005783">
    <property type="term" value="C:endoplasmic reticulum"/>
    <property type="evidence" value="ECO:0000250"/>
    <property type="project" value="UniProtKB"/>
</dbReference>
<dbReference type="GO" id="GO:0005789">
    <property type="term" value="C:endoplasmic reticulum membrane"/>
    <property type="evidence" value="ECO:0000250"/>
    <property type="project" value="UniProtKB"/>
</dbReference>
<dbReference type="GO" id="GO:0071782">
    <property type="term" value="C:endoplasmic reticulum tubular network"/>
    <property type="evidence" value="ECO:0000250"/>
    <property type="project" value="UniProtKB"/>
</dbReference>
<dbReference type="GO" id="GO:0098826">
    <property type="term" value="C:endoplasmic reticulum tubular network membrane"/>
    <property type="evidence" value="ECO:0000250"/>
    <property type="project" value="UniProtKB"/>
</dbReference>
<dbReference type="GO" id="GO:0005794">
    <property type="term" value="C:Golgi apparatus"/>
    <property type="evidence" value="ECO:0000250"/>
    <property type="project" value="UniProtKB"/>
</dbReference>
<dbReference type="GO" id="GO:1990674">
    <property type="term" value="C:Golgi cis cisterna membrane"/>
    <property type="evidence" value="ECO:0000250"/>
    <property type="project" value="UniProtKB"/>
</dbReference>
<dbReference type="GO" id="GO:0000139">
    <property type="term" value="C:Golgi membrane"/>
    <property type="evidence" value="ECO:0007669"/>
    <property type="project" value="UniProtKB-SubCell"/>
</dbReference>
<dbReference type="GO" id="GO:0005525">
    <property type="term" value="F:GTP binding"/>
    <property type="evidence" value="ECO:0000250"/>
    <property type="project" value="UniProtKB"/>
</dbReference>
<dbReference type="GO" id="GO:0140523">
    <property type="term" value="F:GTPase-dependent fusogenic activity"/>
    <property type="evidence" value="ECO:0000250"/>
    <property type="project" value="UniProtKB"/>
</dbReference>
<dbReference type="GO" id="GO:0042802">
    <property type="term" value="F:identical protein binding"/>
    <property type="evidence" value="ECO:0000250"/>
    <property type="project" value="UniProtKB"/>
</dbReference>
<dbReference type="GO" id="GO:0007409">
    <property type="term" value="P:axonogenesis"/>
    <property type="evidence" value="ECO:0000250"/>
    <property type="project" value="UniProtKB"/>
</dbReference>
<dbReference type="GO" id="GO:0016320">
    <property type="term" value="P:endoplasmic reticulum membrane fusion"/>
    <property type="evidence" value="ECO:0000250"/>
    <property type="project" value="UniProtKB"/>
</dbReference>
<dbReference type="GO" id="GO:1990809">
    <property type="term" value="P:endoplasmic reticulum tubular network membrane organization"/>
    <property type="evidence" value="ECO:0000250"/>
    <property type="project" value="UniProtKB"/>
</dbReference>
<dbReference type="CDD" id="cd01851">
    <property type="entry name" value="GBP"/>
    <property type="match status" value="1"/>
</dbReference>
<dbReference type="FunFam" id="1.20.58.420:FF:000001">
    <property type="entry name" value="Atlastin-1 isoform 1"/>
    <property type="match status" value="1"/>
</dbReference>
<dbReference type="FunFam" id="3.40.50.300:FF:000497">
    <property type="entry name" value="Atlastin-1 isoform 1"/>
    <property type="match status" value="1"/>
</dbReference>
<dbReference type="Gene3D" id="1.20.58.420">
    <property type="entry name" value="AHSP"/>
    <property type="match status" value="1"/>
</dbReference>
<dbReference type="Gene3D" id="3.40.50.300">
    <property type="entry name" value="P-loop containing nucleotide triphosphate hydrolases"/>
    <property type="match status" value="1"/>
</dbReference>
<dbReference type="InterPro" id="IPR030386">
    <property type="entry name" value="G_GB1_RHD3_dom"/>
</dbReference>
<dbReference type="InterPro" id="IPR036543">
    <property type="entry name" value="Guanylate-bd_C_sf"/>
</dbReference>
<dbReference type="InterPro" id="IPR015894">
    <property type="entry name" value="Guanylate-bd_N"/>
</dbReference>
<dbReference type="InterPro" id="IPR027417">
    <property type="entry name" value="P-loop_NTPase"/>
</dbReference>
<dbReference type="PANTHER" id="PTHR10751">
    <property type="entry name" value="GUANYLATE BINDING PROTEIN"/>
    <property type="match status" value="1"/>
</dbReference>
<dbReference type="Pfam" id="PF02263">
    <property type="entry name" value="GBP"/>
    <property type="match status" value="1"/>
</dbReference>
<dbReference type="SUPFAM" id="SSF48340">
    <property type="entry name" value="Interferon-induced guanylate-binding protein 1 (GBP1), C-terminal domain"/>
    <property type="match status" value="1"/>
</dbReference>
<dbReference type="SUPFAM" id="SSF52540">
    <property type="entry name" value="P-loop containing nucleoside triphosphate hydrolases"/>
    <property type="match status" value="1"/>
</dbReference>
<dbReference type="PROSITE" id="PS51715">
    <property type="entry name" value="G_GB1_RHD3"/>
    <property type="match status" value="1"/>
</dbReference>
<keyword id="KW-0007">Acetylation</keyword>
<keyword id="KW-0966">Cell projection</keyword>
<keyword id="KW-0175">Coiled coil</keyword>
<keyword id="KW-0256">Endoplasmic reticulum</keyword>
<keyword id="KW-0333">Golgi apparatus</keyword>
<keyword id="KW-0342">GTP-binding</keyword>
<keyword id="KW-0378">Hydrolase</keyword>
<keyword id="KW-0460">Magnesium</keyword>
<keyword id="KW-0472">Membrane</keyword>
<keyword id="KW-0479">Metal-binding</keyword>
<keyword id="KW-0547">Nucleotide-binding</keyword>
<keyword id="KW-0597">Phosphoprotein</keyword>
<keyword id="KW-1185">Reference proteome</keyword>
<keyword id="KW-0812">Transmembrane</keyword>
<keyword id="KW-1133">Transmembrane helix</keyword>
<protein>
    <recommendedName>
        <fullName evidence="4">Atlastin-1</fullName>
        <ecNumber evidence="4">3.6.5.-</ecNumber>
    </recommendedName>
</protein>
<reference key="1">
    <citation type="submission" date="2004-11" db="EMBL/GenBank/DDBJ databases">
        <authorList>
            <consortium name="The German cDNA consortium"/>
        </authorList>
    </citation>
    <scope>NUCLEOTIDE SEQUENCE [LARGE SCALE MRNA]</scope>
    <source>
        <tissue>Brain cortex</tissue>
    </source>
</reference>
<feature type="chain" id="PRO_0000250483" description="Atlastin-1">
    <location>
        <begin position="1"/>
        <end position="558"/>
    </location>
</feature>
<feature type="topological domain" description="Cytoplasmic" evidence="4">
    <location>
        <begin position="1"/>
        <end position="449"/>
    </location>
</feature>
<feature type="transmembrane region" description="Helical" evidence="5">
    <location>
        <begin position="450"/>
        <end position="470"/>
    </location>
</feature>
<feature type="topological domain" description="Lumenal" evidence="4">
    <location>
        <position position="471"/>
    </location>
</feature>
<feature type="transmembrane region" description="Helical" evidence="5">
    <location>
        <begin position="472"/>
        <end position="492"/>
    </location>
</feature>
<feature type="topological domain" description="Cytoplasmic" evidence="4">
    <location>
        <begin position="493"/>
        <end position="558"/>
    </location>
</feature>
<feature type="domain" description="GB1/RHD3-type G" evidence="6">
    <location>
        <begin position="64"/>
        <end position="309"/>
    </location>
</feature>
<feature type="region of interest" description="N-terminal hypervariable region (HVR)" evidence="4">
    <location>
        <begin position="1"/>
        <end position="34"/>
    </location>
</feature>
<feature type="region of interest" description="Disordered" evidence="7">
    <location>
        <begin position="1"/>
        <end position="27"/>
    </location>
</feature>
<feature type="region of interest" description="3HB (three-helix bundle) domain" evidence="4">
    <location>
        <begin position="347"/>
        <end position="438"/>
    </location>
</feature>
<feature type="region of interest" description="Linker" evidence="4">
    <location>
        <begin position="439"/>
        <end position="447"/>
    </location>
</feature>
<feature type="region of interest" description="Autoinhibitory domain" evidence="4">
    <location>
        <begin position="521"/>
        <end position="558"/>
    </location>
</feature>
<feature type="coiled-coil region" evidence="5">
    <location>
        <begin position="412"/>
        <end position="439"/>
    </location>
</feature>
<feature type="binding site" evidence="4">
    <location>
        <position position="77"/>
    </location>
    <ligand>
        <name>GDP</name>
        <dbReference type="ChEBI" id="CHEBI:58189"/>
    </ligand>
</feature>
<feature type="binding site" evidence="4">
    <location>
        <position position="77"/>
    </location>
    <ligand>
        <name>GTP</name>
        <dbReference type="ChEBI" id="CHEBI:37565"/>
    </ligand>
</feature>
<feature type="binding site" evidence="4">
    <location>
        <position position="78"/>
    </location>
    <ligand>
        <name>GDP</name>
        <dbReference type="ChEBI" id="CHEBI:58189"/>
    </ligand>
</feature>
<feature type="binding site" evidence="4">
    <location>
        <position position="78"/>
    </location>
    <ligand>
        <name>GTP</name>
        <dbReference type="ChEBI" id="CHEBI:37565"/>
    </ligand>
</feature>
<feature type="binding site" evidence="4">
    <location>
        <position position="79"/>
    </location>
    <ligand>
        <name>GDP</name>
        <dbReference type="ChEBI" id="CHEBI:58189"/>
    </ligand>
</feature>
<feature type="binding site" evidence="4">
    <location>
        <position position="79"/>
    </location>
    <ligand>
        <name>GTP</name>
        <dbReference type="ChEBI" id="CHEBI:37565"/>
    </ligand>
</feature>
<feature type="binding site" evidence="4">
    <location>
        <position position="80"/>
    </location>
    <ligand>
        <name>GDP</name>
        <dbReference type="ChEBI" id="CHEBI:58189"/>
    </ligand>
</feature>
<feature type="binding site" evidence="4">
    <location>
        <position position="80"/>
    </location>
    <ligand>
        <name>GTP</name>
        <dbReference type="ChEBI" id="CHEBI:37565"/>
    </ligand>
</feature>
<feature type="binding site" evidence="4">
    <location>
        <position position="81"/>
    </location>
    <ligand>
        <name>GDP</name>
        <dbReference type="ChEBI" id="CHEBI:58189"/>
    </ligand>
</feature>
<feature type="binding site" evidence="4">
    <location>
        <position position="81"/>
    </location>
    <ligand>
        <name>GTP</name>
        <dbReference type="ChEBI" id="CHEBI:37565"/>
    </ligand>
</feature>
<feature type="binding site" evidence="4">
    <location>
        <position position="81"/>
    </location>
    <ligand>
        <name>Mg(2+)</name>
        <dbReference type="ChEBI" id="CHEBI:18420"/>
    </ligand>
</feature>
<feature type="binding site" evidence="4">
    <location>
        <position position="82"/>
    </location>
    <ligand>
        <name>GDP</name>
        <dbReference type="ChEBI" id="CHEBI:58189"/>
    </ligand>
</feature>
<feature type="binding site" evidence="4">
    <location>
        <position position="82"/>
    </location>
    <ligand>
        <name>GTP</name>
        <dbReference type="ChEBI" id="CHEBI:37565"/>
    </ligand>
</feature>
<feature type="binding site" evidence="4">
    <location>
        <position position="148"/>
    </location>
    <ligand>
        <name>GDP</name>
        <dbReference type="ChEBI" id="CHEBI:58189"/>
    </ligand>
</feature>
<feature type="binding site" evidence="4">
    <location>
        <position position="217"/>
    </location>
    <ligand>
        <name>GDP</name>
        <dbReference type="ChEBI" id="CHEBI:58189"/>
    </ligand>
</feature>
<feature type="binding site" evidence="4">
    <location>
        <position position="217"/>
    </location>
    <ligand>
        <name>GTP</name>
        <dbReference type="ChEBI" id="CHEBI:37565"/>
    </ligand>
</feature>
<feature type="binding site" evidence="4">
    <location>
        <position position="218"/>
    </location>
    <ligand>
        <name>GDP</name>
        <dbReference type="ChEBI" id="CHEBI:58189"/>
    </ligand>
</feature>
<feature type="binding site" evidence="4">
    <location>
        <position position="218"/>
    </location>
    <ligand>
        <name>GTP</name>
        <dbReference type="ChEBI" id="CHEBI:37565"/>
    </ligand>
</feature>
<feature type="binding site" evidence="4">
    <location>
        <position position="276"/>
    </location>
    <ligand>
        <name>GDP</name>
        <dbReference type="ChEBI" id="CHEBI:58189"/>
    </ligand>
</feature>
<feature type="binding site" evidence="4">
    <location>
        <position position="276"/>
    </location>
    <ligand>
        <name>GTP</name>
        <dbReference type="ChEBI" id="CHEBI:37565"/>
    </ligand>
</feature>
<feature type="binding site" evidence="4">
    <location>
        <position position="279"/>
    </location>
    <ligand>
        <name>GDP</name>
        <dbReference type="ChEBI" id="CHEBI:58189"/>
    </ligand>
</feature>
<feature type="modified residue" description="Phosphoserine" evidence="3">
    <location>
        <position position="10"/>
    </location>
</feature>
<feature type="modified residue" description="Phosphoserine" evidence="3">
    <location>
        <position position="22"/>
    </location>
</feature>
<feature type="modified residue" description="Phosphoserine" evidence="3">
    <location>
        <position position="23"/>
    </location>
</feature>
<feature type="modified residue" description="N6-acetyllysine" evidence="1">
    <location>
        <position position="395"/>
    </location>
</feature>
<feature type="sequence conflict" description="In Ref. 1; CAH93275." evidence="8" ref="1">
    <original>K</original>
    <variation>R</variation>
    <location>
        <position position="30"/>
    </location>
</feature>
<proteinExistence type="evidence at transcript level"/>
<evidence type="ECO:0000250" key="1">
    <source>
        <dbReference type="UniProtKB" id="Q6DD88"/>
    </source>
</evidence>
<evidence type="ECO:0000250" key="2">
    <source>
        <dbReference type="UniProtKB" id="Q6PST4"/>
    </source>
</evidence>
<evidence type="ECO:0000250" key="3">
    <source>
        <dbReference type="UniProtKB" id="Q8BH66"/>
    </source>
</evidence>
<evidence type="ECO:0000250" key="4">
    <source>
        <dbReference type="UniProtKB" id="Q8WXF7"/>
    </source>
</evidence>
<evidence type="ECO:0000255" key="5"/>
<evidence type="ECO:0000255" key="6">
    <source>
        <dbReference type="PROSITE-ProRule" id="PRU01052"/>
    </source>
</evidence>
<evidence type="ECO:0000256" key="7">
    <source>
        <dbReference type="SAM" id="MobiDB-lite"/>
    </source>
</evidence>
<evidence type="ECO:0000305" key="8"/>
<accession>Q5R4P1</accession>
<accession>Q5RA74</accession>